<name>VM1B1_BOTAT</name>
<sequence length="24" mass="2752">YIELAVVADHGIFTKYNSNLNTIR</sequence>
<reference key="1">
    <citation type="journal article" date="2010" name="Toxicon">
        <title>Isolation and biological characterization of Batx-I, a weak hemorrhagic and fibrinogenolytic PI metalloproteinase from Colombian Bothrops atrox venom.</title>
        <authorList>
            <person name="Patino A.C."/>
            <person name="Pereanez J.A."/>
            <person name="Nunez V."/>
            <person name="Benjumea D.M."/>
            <person name="Fernandez M."/>
            <person name="Rucavado A."/>
            <person name="Sanz L."/>
            <person name="Calvete J.J."/>
        </authorList>
    </citation>
    <scope>PROTEIN SEQUENCE</scope>
    <scope>FUNCTION</scope>
    <scope>ACTIVITY REGULATION</scope>
    <scope>TOXIC DOSE</scope>
    <scope>MASS SPECTROMETRY</scope>
    <source>
        <strain>Colombia</strain>
        <tissue>Venom</tissue>
    </source>
</reference>
<evidence type="ECO:0000250" key="1"/>
<evidence type="ECO:0000255" key="2">
    <source>
        <dbReference type="PROSITE-ProRule" id="PRU00276"/>
    </source>
</evidence>
<evidence type="ECO:0000269" key="3">
    <source>
    </source>
</evidence>
<evidence type="ECO:0000305" key="4"/>
<evidence type="ECO:0000305" key="5">
    <source>
    </source>
</evidence>
<proteinExistence type="evidence at protein level"/>
<accession>P0DJE1</accession>
<keyword id="KW-0106">Calcium</keyword>
<keyword id="KW-0903">Direct protein sequencing</keyword>
<keyword id="KW-1015">Disulfide bond</keyword>
<keyword id="KW-1206">Fibrinogenolytic toxin</keyword>
<keyword id="KW-1200">Hemorrhagic toxin</keyword>
<keyword id="KW-1199">Hemostasis impairing toxin</keyword>
<keyword id="KW-0378">Hydrolase</keyword>
<keyword id="KW-0479">Metal-binding</keyword>
<keyword id="KW-0482">Metalloprotease</keyword>
<keyword id="KW-0959">Myotoxin</keyword>
<keyword id="KW-0645">Protease</keyword>
<keyword id="KW-0964">Secreted</keyword>
<keyword id="KW-0800">Toxin</keyword>
<keyword id="KW-0862">Zinc</keyword>
<feature type="chain" id="PRO_0000415927" description="Snake venom metalloproteinase Batx-1">
    <location>
        <begin position="1" status="less than"/>
        <end position="24" status="greater than"/>
    </location>
</feature>
<feature type="domain" description="Peptidase M12B" evidence="2">
    <location>
        <begin position="1" status="less than"/>
        <end position="24" status="greater than"/>
    </location>
</feature>
<feature type="binding site" evidence="1">
    <location>
        <position position="3"/>
    </location>
    <ligand>
        <name>Ca(2+)</name>
        <dbReference type="ChEBI" id="CHEBI:29108"/>
    </ligand>
</feature>
<feature type="non-terminal residue">
    <location>
        <position position="1"/>
    </location>
</feature>
<feature type="non-terminal residue">
    <location>
        <position position="24"/>
    </location>
</feature>
<dbReference type="EC" id="3.4.24.-"/>
<dbReference type="GO" id="GO:0005576">
    <property type="term" value="C:extracellular region"/>
    <property type="evidence" value="ECO:0007669"/>
    <property type="project" value="UniProtKB-SubCell"/>
</dbReference>
<dbReference type="GO" id="GO:0046872">
    <property type="term" value="F:metal ion binding"/>
    <property type="evidence" value="ECO:0007669"/>
    <property type="project" value="UniProtKB-KW"/>
</dbReference>
<dbReference type="GO" id="GO:0008237">
    <property type="term" value="F:metallopeptidase activity"/>
    <property type="evidence" value="ECO:0007669"/>
    <property type="project" value="UniProtKB-KW"/>
</dbReference>
<dbReference type="GO" id="GO:0090729">
    <property type="term" value="F:toxin activity"/>
    <property type="evidence" value="ECO:0007669"/>
    <property type="project" value="UniProtKB-KW"/>
</dbReference>
<dbReference type="GO" id="GO:0006508">
    <property type="term" value="P:proteolysis"/>
    <property type="evidence" value="ECO:0007669"/>
    <property type="project" value="UniProtKB-KW"/>
</dbReference>
<comment type="function">
    <text evidence="3">Zinc metalloproteinase that exhits a weak hemorrhagic activity. Degrades preferentially the Aalpha- (FGA) and Bbeta-chains (FGB) of fibrinogen, and partially degrades gamma-chain (FGG) at higher concentration. Induces a mild myotoxicity, but lacks coagulant activity on human plasma or bovin fibrinogen and defibrinating activity.</text>
</comment>
<comment type="cofactor">
    <cofactor evidence="1">
        <name>Zn(2+)</name>
        <dbReference type="ChEBI" id="CHEBI:29105"/>
    </cofactor>
    <text evidence="1">Binds 1 zinc ion per subunit.</text>
</comment>
<comment type="activity regulation">
    <text evidence="3">Inhibited by EDTA, and o-phenanthroline, but not inhibited by PMSF, pepstatin A, and aprotinin.</text>
</comment>
<comment type="subunit">
    <text evidence="1">Monomer.</text>
</comment>
<comment type="subcellular location">
    <subcellularLocation>
        <location>Secreted</location>
    </subcellularLocation>
</comment>
<comment type="tissue specificity">
    <text>Expressed by the venom gland.</text>
</comment>
<comment type="PTM">
    <text>The N-terminus is blocked.</text>
</comment>
<comment type="PTM">
    <text evidence="1">Contains 3 disulfide bonds.</text>
</comment>
<comment type="mass spectrometry" mass="23296.2" method="Electrospray" evidence="3">
    <text>Average mass.</text>
</comment>
<comment type="toxic dose">
    <text evidence="3">The minimal hemorrhagic dose is 0.85 mg/kg by intradermal injection into mice.</text>
</comment>
<comment type="miscellaneous">
    <text evidence="5">Accounts for about 45% of venom proteins.</text>
</comment>
<comment type="similarity">
    <text evidence="4">Belongs to the venom metalloproteinase (M12B) family. P-I subfamily.</text>
</comment>
<protein>
    <recommendedName>
        <fullName>Snake venom metalloproteinase Batx-1</fullName>
        <shortName>SVMP</shortName>
        <ecNumber>3.4.24.-</ecNumber>
    </recommendedName>
    <alternativeName>
        <fullName>Batx-I</fullName>
    </alternativeName>
</protein>
<organism>
    <name type="scientific">Bothrops atrox</name>
    <name type="common">Barba amarilla</name>
    <name type="synonym">Fer-de-lance</name>
    <dbReference type="NCBI Taxonomy" id="8725"/>
    <lineage>
        <taxon>Eukaryota</taxon>
        <taxon>Metazoa</taxon>
        <taxon>Chordata</taxon>
        <taxon>Craniata</taxon>
        <taxon>Vertebrata</taxon>
        <taxon>Euteleostomi</taxon>
        <taxon>Lepidosauria</taxon>
        <taxon>Squamata</taxon>
        <taxon>Bifurcata</taxon>
        <taxon>Unidentata</taxon>
        <taxon>Episquamata</taxon>
        <taxon>Toxicofera</taxon>
        <taxon>Serpentes</taxon>
        <taxon>Colubroidea</taxon>
        <taxon>Viperidae</taxon>
        <taxon>Crotalinae</taxon>
        <taxon>Bothrops</taxon>
    </lineage>
</organism>